<name>LONH_ECOLI</name>
<proteinExistence type="inferred from homology"/>
<protein>
    <recommendedName>
        <fullName>Putative Lon protease homolog</fullName>
        <ecNumber>3.4.21.-</ecNumber>
    </recommendedName>
    <alternativeName>
        <fullName>ATP-dependent protease La homolog</fullName>
    </alternativeName>
</protein>
<feature type="chain" id="PRO_0000076148" description="Putative Lon protease homolog">
    <location>
        <begin position="1"/>
        <end position="586"/>
    </location>
</feature>
<feature type="domain" description="Lon proteolytic" evidence="2">
    <location>
        <begin position="346"/>
        <end position="543"/>
    </location>
</feature>
<feature type="active site" evidence="1">
    <location>
        <position position="438"/>
    </location>
</feature>
<feature type="active site" evidence="1">
    <location>
        <position position="481"/>
    </location>
</feature>
<evidence type="ECO:0000250" key="1"/>
<evidence type="ECO:0000255" key="2">
    <source>
        <dbReference type="PROSITE-ProRule" id="PRU01122"/>
    </source>
</evidence>
<accession>P75867</accession>
<reference key="1">
    <citation type="journal article" date="1996" name="DNA Res.">
        <title>A 718-kb DNA sequence of the Escherichia coli K-12 genome corresponding to the 12.7-28.0 min region on the linkage map.</title>
        <authorList>
            <person name="Oshima T."/>
            <person name="Aiba H."/>
            <person name="Baba T."/>
            <person name="Fujita K."/>
            <person name="Hayashi K."/>
            <person name="Honjo A."/>
            <person name="Ikemoto K."/>
            <person name="Inada T."/>
            <person name="Itoh T."/>
            <person name="Kajihara M."/>
            <person name="Kanai K."/>
            <person name="Kashimoto K."/>
            <person name="Kimura S."/>
            <person name="Kitagawa M."/>
            <person name="Makino K."/>
            <person name="Masuda S."/>
            <person name="Miki T."/>
            <person name="Mizobuchi K."/>
            <person name="Mori H."/>
            <person name="Motomura K."/>
            <person name="Nakamura Y."/>
            <person name="Nashimoto H."/>
            <person name="Nishio Y."/>
            <person name="Saito N."/>
            <person name="Sampei G."/>
            <person name="Seki Y."/>
            <person name="Tagami H."/>
            <person name="Takemoto K."/>
            <person name="Wada C."/>
            <person name="Yamamoto Y."/>
            <person name="Yano M."/>
            <person name="Horiuchi T."/>
        </authorList>
    </citation>
    <scope>NUCLEOTIDE SEQUENCE [LARGE SCALE GENOMIC DNA]</scope>
    <source>
        <strain>K12 / W3110 / ATCC 27325 / DSM 5911</strain>
    </source>
</reference>
<reference key="2">
    <citation type="journal article" date="1997" name="Science">
        <title>The complete genome sequence of Escherichia coli K-12.</title>
        <authorList>
            <person name="Blattner F.R."/>
            <person name="Plunkett G. III"/>
            <person name="Bloch C.A."/>
            <person name="Perna N.T."/>
            <person name="Burland V."/>
            <person name="Riley M."/>
            <person name="Collado-Vides J."/>
            <person name="Glasner J.D."/>
            <person name="Rode C.K."/>
            <person name="Mayhew G.F."/>
            <person name="Gregor J."/>
            <person name="Davis N.W."/>
            <person name="Kirkpatrick H.A."/>
            <person name="Goeden M.A."/>
            <person name="Rose D.J."/>
            <person name="Mau B."/>
            <person name="Shao Y."/>
        </authorList>
    </citation>
    <scope>NUCLEOTIDE SEQUENCE [LARGE SCALE GENOMIC DNA]</scope>
    <source>
        <strain>K12 / MG1655 / ATCC 47076</strain>
    </source>
</reference>
<reference key="3">
    <citation type="journal article" date="2006" name="Mol. Syst. Biol.">
        <title>Highly accurate genome sequences of Escherichia coli K-12 strains MG1655 and W3110.</title>
        <authorList>
            <person name="Hayashi K."/>
            <person name="Morooka N."/>
            <person name="Yamamoto Y."/>
            <person name="Fujita K."/>
            <person name="Isono K."/>
            <person name="Choi S."/>
            <person name="Ohtsubo E."/>
            <person name="Baba T."/>
            <person name="Wanner B.L."/>
            <person name="Mori H."/>
            <person name="Horiuchi T."/>
        </authorList>
    </citation>
    <scope>NUCLEOTIDE SEQUENCE [LARGE SCALE GENOMIC DNA]</scope>
    <source>
        <strain>K12 / W3110 / ATCC 27325 / DSM 5911</strain>
    </source>
</reference>
<sequence>MTITKLAWRDLVPDTDSYQEIFAQPHLIDENDPLFSDTQPRLQFALEQLLHTRASSSFMLAKAPEESEYLNLIANAARTLQSDAGQLVGGHYEVSGHSIRLRHAVSADDNFATLTQVVAADWVEAEQLFGCLRQFNGDITLQPGLVHQANGGILIISLRTLLAQPLLWMRLKNIVNRERFDWVAFDESRPLPVSVPSMPLKLKVILVGERESLADFQEMEPELSEQAIYSEFEDTLQIVDAESVTQWCRWVTFTARHNHLPAPGADAWPILIREAARYTGEQETLPLSPQWILRQCKEVASLCDGDTFSGEQLNLMLQQREWREGFLAERMQDEILQEQILIETEGERIGQINALSVIEFPGHPRAFGEPSRISCVVHIGDGEFTDIERKAELGGNIHAKGMMIMQAFLMSELQLEQQIPFSASLTFEQSYSEVDGDSASMAELCALISALADVPVNQSIAITGSVDQFGRAQPVGGLNEKIEGFFAICQQRELTGKQGVIIPTANVRHLSLHSELVKAVEEGKFTIWAVDDVTDALPLLLNLVWDGEGQTTLMQTIQERIAQASQQEGRHRFPWPLRWLNWFIPN</sequence>
<dbReference type="EC" id="3.4.21.-"/>
<dbReference type="EMBL" id="U00096">
    <property type="protein sequence ID" value="AAC74041.1"/>
    <property type="molecule type" value="Genomic_DNA"/>
</dbReference>
<dbReference type="EMBL" id="AP009048">
    <property type="protein sequence ID" value="BAA35713.2"/>
    <property type="molecule type" value="Genomic_DNA"/>
</dbReference>
<dbReference type="PIR" id="B64836">
    <property type="entry name" value="B64836"/>
</dbReference>
<dbReference type="RefSeq" id="NP_415475.1">
    <property type="nucleotide sequence ID" value="NC_000913.3"/>
</dbReference>
<dbReference type="RefSeq" id="WP_000156518.1">
    <property type="nucleotide sequence ID" value="NZ_LN832404.1"/>
</dbReference>
<dbReference type="SMR" id="P75867"/>
<dbReference type="BioGRID" id="4260030">
    <property type="interactions" value="40"/>
</dbReference>
<dbReference type="DIP" id="DIP-11487N"/>
<dbReference type="FunCoup" id="P75867">
    <property type="interactions" value="7"/>
</dbReference>
<dbReference type="STRING" id="511145.b0955"/>
<dbReference type="MEROPS" id="S16.A10"/>
<dbReference type="jPOST" id="P75867"/>
<dbReference type="PaxDb" id="511145-b0955"/>
<dbReference type="EnsemblBacteria" id="AAC74041">
    <property type="protein sequence ID" value="AAC74041"/>
    <property type="gene ID" value="b0955"/>
</dbReference>
<dbReference type="GeneID" id="945569"/>
<dbReference type="KEGG" id="ecj:JW0938"/>
<dbReference type="KEGG" id="eco:b0955"/>
<dbReference type="KEGG" id="ecoc:C3026_05840"/>
<dbReference type="PATRIC" id="fig|1411691.4.peg.1319"/>
<dbReference type="EchoBASE" id="EB3482"/>
<dbReference type="eggNOG" id="COG1067">
    <property type="taxonomic scope" value="Bacteria"/>
</dbReference>
<dbReference type="InParanoid" id="P75867"/>
<dbReference type="OMA" id="GFFTICQ"/>
<dbReference type="OrthoDB" id="9758568at2"/>
<dbReference type="PhylomeDB" id="P75867"/>
<dbReference type="BioCyc" id="EcoCyc:G6493-MONOMER"/>
<dbReference type="PRO" id="PR:P75867"/>
<dbReference type="Proteomes" id="UP000000625">
    <property type="component" value="Chromosome"/>
</dbReference>
<dbReference type="GO" id="GO:0005524">
    <property type="term" value="F:ATP binding"/>
    <property type="evidence" value="ECO:0007669"/>
    <property type="project" value="InterPro"/>
</dbReference>
<dbReference type="GO" id="GO:0004176">
    <property type="term" value="F:ATP-dependent peptidase activity"/>
    <property type="evidence" value="ECO:0007669"/>
    <property type="project" value="InterPro"/>
</dbReference>
<dbReference type="GO" id="GO:0004252">
    <property type="term" value="F:serine-type endopeptidase activity"/>
    <property type="evidence" value="ECO:0007669"/>
    <property type="project" value="InterPro"/>
</dbReference>
<dbReference type="GO" id="GO:0030163">
    <property type="term" value="P:protein catabolic process"/>
    <property type="evidence" value="ECO:0007669"/>
    <property type="project" value="InterPro"/>
</dbReference>
<dbReference type="GO" id="GO:0006508">
    <property type="term" value="P:proteolysis"/>
    <property type="evidence" value="ECO:0007669"/>
    <property type="project" value="UniProtKB-KW"/>
</dbReference>
<dbReference type="Gene3D" id="3.30.230.10">
    <property type="match status" value="1"/>
</dbReference>
<dbReference type="Gene3D" id="3.40.50.300">
    <property type="entry name" value="P-loop containing nucleotide triphosphate hydrolases"/>
    <property type="match status" value="1"/>
</dbReference>
<dbReference type="InterPro" id="IPR041699">
    <property type="entry name" value="AAA_32"/>
</dbReference>
<dbReference type="InterPro" id="IPR008269">
    <property type="entry name" value="Lon_proteolytic"/>
</dbReference>
<dbReference type="InterPro" id="IPR027065">
    <property type="entry name" value="Lon_Prtase"/>
</dbReference>
<dbReference type="InterPro" id="IPR027417">
    <property type="entry name" value="P-loop_NTPase"/>
</dbReference>
<dbReference type="InterPro" id="IPR020568">
    <property type="entry name" value="Ribosomal_Su5_D2-typ_SF"/>
</dbReference>
<dbReference type="InterPro" id="IPR014721">
    <property type="entry name" value="Ribsml_uS5_D2-typ_fold_subgr"/>
</dbReference>
<dbReference type="PANTHER" id="PTHR10046">
    <property type="entry name" value="ATP DEPENDENT LON PROTEASE FAMILY MEMBER"/>
    <property type="match status" value="1"/>
</dbReference>
<dbReference type="Pfam" id="PF13654">
    <property type="entry name" value="AAA_32"/>
    <property type="match status" value="1"/>
</dbReference>
<dbReference type="Pfam" id="PF05362">
    <property type="entry name" value="Lon_C"/>
    <property type="match status" value="1"/>
</dbReference>
<dbReference type="PRINTS" id="PR00830">
    <property type="entry name" value="ENDOLAPTASE"/>
</dbReference>
<dbReference type="SUPFAM" id="SSF54211">
    <property type="entry name" value="Ribosomal protein S5 domain 2-like"/>
    <property type="match status" value="1"/>
</dbReference>
<dbReference type="PROSITE" id="PS51786">
    <property type="entry name" value="LON_PROTEOLYTIC"/>
    <property type="match status" value="1"/>
</dbReference>
<gene>
    <name type="primary">ycbZ</name>
    <name type="ordered locus">b0955</name>
    <name type="ordered locus">JW0938</name>
</gene>
<keyword id="KW-0378">Hydrolase</keyword>
<keyword id="KW-0645">Protease</keyword>
<keyword id="KW-1185">Reference proteome</keyword>
<keyword id="KW-0720">Serine protease</keyword>
<comment type="domain">
    <text>Lacks the ATP-binding domain.</text>
</comment>
<comment type="similarity">
    <text evidence="2">Belongs to the peptidase S16 family.</text>
</comment>
<organism>
    <name type="scientific">Escherichia coli (strain K12)</name>
    <dbReference type="NCBI Taxonomy" id="83333"/>
    <lineage>
        <taxon>Bacteria</taxon>
        <taxon>Pseudomonadati</taxon>
        <taxon>Pseudomonadota</taxon>
        <taxon>Gammaproteobacteria</taxon>
        <taxon>Enterobacterales</taxon>
        <taxon>Enterobacteriaceae</taxon>
        <taxon>Escherichia</taxon>
    </lineage>
</organism>